<proteinExistence type="inferred from homology"/>
<evidence type="ECO:0000255" key="1">
    <source>
        <dbReference type="HAMAP-Rule" id="MF_00087"/>
    </source>
</evidence>
<reference key="1">
    <citation type="journal article" date="2003" name="Proc. Natl. Acad. Sci. U.S.A.">
        <title>Genome sequence of the cyanobacterium Prochlorococcus marinus SS120, a nearly minimal oxyphototrophic genome.</title>
        <authorList>
            <person name="Dufresne A."/>
            <person name="Salanoubat M."/>
            <person name="Partensky F."/>
            <person name="Artiguenave F."/>
            <person name="Axmann I.M."/>
            <person name="Barbe V."/>
            <person name="Duprat S."/>
            <person name="Galperin M.Y."/>
            <person name="Koonin E.V."/>
            <person name="Le Gall F."/>
            <person name="Makarova K.S."/>
            <person name="Ostrowski M."/>
            <person name="Oztas S."/>
            <person name="Robert C."/>
            <person name="Rogozin I.B."/>
            <person name="Scanlan D.J."/>
            <person name="Tandeau de Marsac N."/>
            <person name="Weissenbach J."/>
            <person name="Wincker P."/>
            <person name="Wolf Y.I."/>
            <person name="Hess W.R."/>
        </authorList>
    </citation>
    <scope>NUCLEOTIDE SEQUENCE [LARGE SCALE GENOMIC DNA]</scope>
    <source>
        <strain>SARG / CCMP1375 / SS120</strain>
    </source>
</reference>
<comment type="function">
    <text evidence="1">Catalyzes the NADPH-dependent reduction of glutamyl-tRNA(Glu) to glutamate 1-semialdehyde (GSA).</text>
</comment>
<comment type="catalytic activity">
    <reaction evidence="1">
        <text>(S)-4-amino-5-oxopentanoate + tRNA(Glu) + NADP(+) = L-glutamyl-tRNA(Glu) + NADPH + H(+)</text>
        <dbReference type="Rhea" id="RHEA:12344"/>
        <dbReference type="Rhea" id="RHEA-COMP:9663"/>
        <dbReference type="Rhea" id="RHEA-COMP:9680"/>
        <dbReference type="ChEBI" id="CHEBI:15378"/>
        <dbReference type="ChEBI" id="CHEBI:57501"/>
        <dbReference type="ChEBI" id="CHEBI:57783"/>
        <dbReference type="ChEBI" id="CHEBI:58349"/>
        <dbReference type="ChEBI" id="CHEBI:78442"/>
        <dbReference type="ChEBI" id="CHEBI:78520"/>
        <dbReference type="EC" id="1.2.1.70"/>
    </reaction>
</comment>
<comment type="pathway">
    <text evidence="1">Porphyrin-containing compound metabolism; protoporphyrin-IX biosynthesis; 5-aminolevulinate from L-glutamyl-tRNA(Glu): step 1/2.</text>
</comment>
<comment type="pathway">
    <text evidence="1">Porphyrin-containing compound metabolism; chlorophyll biosynthesis.</text>
</comment>
<comment type="subunit">
    <text evidence="1">Homodimer.</text>
</comment>
<comment type="domain">
    <text evidence="1">Possesses an unusual extended V-shaped dimeric structure with each monomer consisting of three distinct domains arranged along a curved 'spinal' alpha-helix. The N-terminal catalytic domain specifically recognizes the glutamate moiety of the substrate. The second domain is the NADPH-binding domain, and the third C-terminal domain is responsible for dimerization.</text>
</comment>
<comment type="miscellaneous">
    <text evidence="1">During catalysis, the active site Cys acts as a nucleophile attacking the alpha-carbonyl group of tRNA-bound glutamate with the formation of a thioester intermediate between enzyme and glutamate, and the concomitant release of tRNA(Glu). The thioester intermediate is finally reduced by direct hydride transfer from NADPH, to form the product GSA.</text>
</comment>
<comment type="similarity">
    <text evidence="1">Belongs to the glutamyl-tRNA reductase family.</text>
</comment>
<dbReference type="EC" id="1.2.1.70" evidence="1"/>
<dbReference type="EMBL" id="AE017126">
    <property type="protein sequence ID" value="AAP99885.1"/>
    <property type="molecule type" value="Genomic_DNA"/>
</dbReference>
<dbReference type="RefSeq" id="NP_875233.1">
    <property type="nucleotide sequence ID" value="NC_005042.1"/>
</dbReference>
<dbReference type="RefSeq" id="WP_011124993.1">
    <property type="nucleotide sequence ID" value="NC_005042.1"/>
</dbReference>
<dbReference type="SMR" id="Q7VCA1"/>
<dbReference type="STRING" id="167539.Pro_0841"/>
<dbReference type="EnsemblBacteria" id="AAP99885">
    <property type="protein sequence ID" value="AAP99885"/>
    <property type="gene ID" value="Pro_0841"/>
</dbReference>
<dbReference type="KEGG" id="pma:Pro_0841"/>
<dbReference type="PATRIC" id="fig|167539.5.peg.889"/>
<dbReference type="eggNOG" id="COG0373">
    <property type="taxonomic scope" value="Bacteria"/>
</dbReference>
<dbReference type="HOGENOM" id="CLU_035113_2_1_3"/>
<dbReference type="OrthoDB" id="110209at2"/>
<dbReference type="UniPathway" id="UPA00251">
    <property type="reaction ID" value="UER00316"/>
</dbReference>
<dbReference type="UniPathway" id="UPA00668"/>
<dbReference type="Proteomes" id="UP000001420">
    <property type="component" value="Chromosome"/>
</dbReference>
<dbReference type="GO" id="GO:0008883">
    <property type="term" value="F:glutamyl-tRNA reductase activity"/>
    <property type="evidence" value="ECO:0007669"/>
    <property type="project" value="UniProtKB-UniRule"/>
</dbReference>
<dbReference type="GO" id="GO:0050661">
    <property type="term" value="F:NADP binding"/>
    <property type="evidence" value="ECO:0007669"/>
    <property type="project" value="InterPro"/>
</dbReference>
<dbReference type="GO" id="GO:0015995">
    <property type="term" value="P:chlorophyll biosynthetic process"/>
    <property type="evidence" value="ECO:0007669"/>
    <property type="project" value="UniProtKB-UniRule"/>
</dbReference>
<dbReference type="GO" id="GO:0006782">
    <property type="term" value="P:protoporphyrinogen IX biosynthetic process"/>
    <property type="evidence" value="ECO:0007669"/>
    <property type="project" value="UniProtKB-UniRule"/>
</dbReference>
<dbReference type="CDD" id="cd05213">
    <property type="entry name" value="NAD_bind_Glutamyl_tRNA_reduct"/>
    <property type="match status" value="1"/>
</dbReference>
<dbReference type="FunFam" id="3.30.460.30:FF:000001">
    <property type="entry name" value="Glutamyl-tRNA reductase"/>
    <property type="match status" value="1"/>
</dbReference>
<dbReference type="FunFam" id="3.40.50.720:FF:000031">
    <property type="entry name" value="Glutamyl-tRNA reductase"/>
    <property type="match status" value="1"/>
</dbReference>
<dbReference type="Gene3D" id="3.30.460.30">
    <property type="entry name" value="Glutamyl-tRNA reductase, N-terminal domain"/>
    <property type="match status" value="1"/>
</dbReference>
<dbReference type="Gene3D" id="3.40.50.720">
    <property type="entry name" value="NAD(P)-binding Rossmann-like Domain"/>
    <property type="match status" value="1"/>
</dbReference>
<dbReference type="HAMAP" id="MF_00087">
    <property type="entry name" value="Glu_tRNA_reductase"/>
    <property type="match status" value="1"/>
</dbReference>
<dbReference type="InterPro" id="IPR000343">
    <property type="entry name" value="4pyrrol_synth_GluRdtase"/>
</dbReference>
<dbReference type="InterPro" id="IPR015896">
    <property type="entry name" value="4pyrrol_synth_GluRdtase_dimer"/>
</dbReference>
<dbReference type="InterPro" id="IPR015895">
    <property type="entry name" value="4pyrrol_synth_GluRdtase_N"/>
</dbReference>
<dbReference type="InterPro" id="IPR018214">
    <property type="entry name" value="GluRdtase_CS"/>
</dbReference>
<dbReference type="InterPro" id="IPR036453">
    <property type="entry name" value="GluRdtase_dimer_dom_sf"/>
</dbReference>
<dbReference type="InterPro" id="IPR036343">
    <property type="entry name" value="GluRdtase_N_sf"/>
</dbReference>
<dbReference type="InterPro" id="IPR036291">
    <property type="entry name" value="NAD(P)-bd_dom_sf"/>
</dbReference>
<dbReference type="InterPro" id="IPR006151">
    <property type="entry name" value="Shikm_DH/Glu-tRNA_Rdtase"/>
</dbReference>
<dbReference type="NCBIfam" id="TIGR01035">
    <property type="entry name" value="hemA"/>
    <property type="match status" value="1"/>
</dbReference>
<dbReference type="NCBIfam" id="NF000744">
    <property type="entry name" value="PRK00045.1-3"/>
    <property type="match status" value="1"/>
</dbReference>
<dbReference type="PANTHER" id="PTHR43120">
    <property type="entry name" value="GLUTAMYL-TRNA REDUCTASE 1, CHLOROPLASTIC"/>
    <property type="match status" value="1"/>
</dbReference>
<dbReference type="PANTHER" id="PTHR43120:SF1">
    <property type="entry name" value="GLUTAMYL-TRNA REDUCTASE 1, CHLOROPLASTIC"/>
    <property type="match status" value="1"/>
</dbReference>
<dbReference type="Pfam" id="PF00745">
    <property type="entry name" value="GlutR_dimer"/>
    <property type="match status" value="1"/>
</dbReference>
<dbReference type="Pfam" id="PF05201">
    <property type="entry name" value="GlutR_N"/>
    <property type="match status" value="1"/>
</dbReference>
<dbReference type="Pfam" id="PF01488">
    <property type="entry name" value="Shikimate_DH"/>
    <property type="match status" value="1"/>
</dbReference>
<dbReference type="PIRSF" id="PIRSF000445">
    <property type="entry name" value="4pyrrol_synth_GluRdtase"/>
    <property type="match status" value="1"/>
</dbReference>
<dbReference type="SUPFAM" id="SSF69742">
    <property type="entry name" value="Glutamyl tRNA-reductase catalytic, N-terminal domain"/>
    <property type="match status" value="1"/>
</dbReference>
<dbReference type="SUPFAM" id="SSF69075">
    <property type="entry name" value="Glutamyl tRNA-reductase dimerization domain"/>
    <property type="match status" value="1"/>
</dbReference>
<dbReference type="SUPFAM" id="SSF51735">
    <property type="entry name" value="NAD(P)-binding Rossmann-fold domains"/>
    <property type="match status" value="1"/>
</dbReference>
<dbReference type="PROSITE" id="PS00747">
    <property type="entry name" value="GLUTR"/>
    <property type="match status" value="1"/>
</dbReference>
<accession>Q7VCA1</accession>
<feature type="chain" id="PRO_0000114055" description="Glutamyl-tRNA reductase">
    <location>
        <begin position="1"/>
        <end position="437"/>
    </location>
</feature>
<feature type="active site" description="Nucleophile" evidence="1">
    <location>
        <position position="50"/>
    </location>
</feature>
<feature type="binding site" evidence="1">
    <location>
        <begin position="49"/>
        <end position="52"/>
    </location>
    <ligand>
        <name>substrate</name>
    </ligand>
</feature>
<feature type="binding site" evidence="1">
    <location>
        <position position="109"/>
    </location>
    <ligand>
        <name>substrate</name>
    </ligand>
</feature>
<feature type="binding site" evidence="1">
    <location>
        <begin position="114"/>
        <end position="116"/>
    </location>
    <ligand>
        <name>substrate</name>
    </ligand>
</feature>
<feature type="binding site" evidence="1">
    <location>
        <position position="120"/>
    </location>
    <ligand>
        <name>substrate</name>
    </ligand>
</feature>
<feature type="binding site" evidence="1">
    <location>
        <begin position="198"/>
        <end position="203"/>
    </location>
    <ligand>
        <name>NADP(+)</name>
        <dbReference type="ChEBI" id="CHEBI:58349"/>
    </ligand>
</feature>
<feature type="site" description="Important for activity" evidence="1">
    <location>
        <position position="99"/>
    </location>
</feature>
<gene>
    <name evidence="1" type="primary">hemA</name>
    <name type="ordered locus">Pro_0841</name>
</gene>
<name>HEM1_PROMA</name>
<protein>
    <recommendedName>
        <fullName evidence="1">Glutamyl-tRNA reductase</fullName>
        <shortName evidence="1">GluTR</shortName>
        <ecNumber evidence="1">1.2.1.70</ecNumber>
    </recommendedName>
</protein>
<organism>
    <name type="scientific">Prochlorococcus marinus (strain SARG / CCMP1375 / SS120)</name>
    <dbReference type="NCBI Taxonomy" id="167539"/>
    <lineage>
        <taxon>Bacteria</taxon>
        <taxon>Bacillati</taxon>
        <taxon>Cyanobacteriota</taxon>
        <taxon>Cyanophyceae</taxon>
        <taxon>Synechococcales</taxon>
        <taxon>Prochlorococcaceae</taxon>
        <taxon>Prochlorococcus</taxon>
    </lineage>
</organism>
<sequence>MNIAVVGLSHRTAPVEVREKLSISDEHIEKSFCSLNATEQVLEVSILSTCNRLEIYALVKNQELGVSAIKEFLIDHSGLSKEDLFPHLFTFNQAEAVNHLMRVSGGLDSLVLGEGQILSQVKKMVRLGQDYKSIGPILNRLLTQAVSTGKKVRSDTNLGTGAVSISSAAVELAQLKLGQSLGKDQLMTLQSEKVAVIGAGRMSRLLIQHLQSKGCSKLTLLNRTLNRAESLAKDFPDLDVKCGLLDDLDKCIEFSTLIFTSTASNTPIINSELLSGFKRNNNLLRLIDIGVPRNIASDVSGLPGFEAYDVDDLQEVVARNQDARQQIAIEAQNLIDEEARVFLEWWASLEAVPTINRLRSNLESIRKEELQKALSRMGPDFSARERKVVEALSKGIINKILHTPVTNLRAPQPSSQRKESLKIVESLFELGVSENDQ</sequence>
<keyword id="KW-0149">Chlorophyll biosynthesis</keyword>
<keyword id="KW-0521">NADP</keyword>
<keyword id="KW-0560">Oxidoreductase</keyword>
<keyword id="KW-0627">Porphyrin biosynthesis</keyword>
<keyword id="KW-1185">Reference proteome</keyword>